<gene>
    <name evidence="1" type="primary">uvrC</name>
    <name type="ordered locus">Smal_1403</name>
</gene>
<feature type="chain" id="PRO_1000099522" description="UvrABC system protein C">
    <location>
        <begin position="1"/>
        <end position="614"/>
    </location>
</feature>
<feature type="domain" description="GIY-YIG" evidence="1">
    <location>
        <begin position="20"/>
        <end position="98"/>
    </location>
</feature>
<feature type="domain" description="UVR" evidence="1">
    <location>
        <begin position="207"/>
        <end position="242"/>
    </location>
</feature>
<dbReference type="EMBL" id="CP001111">
    <property type="protein sequence ID" value="ACF51108.1"/>
    <property type="molecule type" value="Genomic_DNA"/>
</dbReference>
<dbReference type="RefSeq" id="WP_004152329.1">
    <property type="nucleotide sequence ID" value="NC_011071.1"/>
</dbReference>
<dbReference type="SMR" id="B4SQQ3"/>
<dbReference type="STRING" id="391008.Smal_1403"/>
<dbReference type="KEGG" id="smt:Smal_1403"/>
<dbReference type="eggNOG" id="COG0322">
    <property type="taxonomic scope" value="Bacteria"/>
</dbReference>
<dbReference type="HOGENOM" id="CLU_014841_3_0_6"/>
<dbReference type="OrthoDB" id="9804933at2"/>
<dbReference type="Proteomes" id="UP000001867">
    <property type="component" value="Chromosome"/>
</dbReference>
<dbReference type="GO" id="GO:0005737">
    <property type="term" value="C:cytoplasm"/>
    <property type="evidence" value="ECO:0007669"/>
    <property type="project" value="UniProtKB-SubCell"/>
</dbReference>
<dbReference type="GO" id="GO:0009380">
    <property type="term" value="C:excinuclease repair complex"/>
    <property type="evidence" value="ECO:0007669"/>
    <property type="project" value="InterPro"/>
</dbReference>
<dbReference type="GO" id="GO:0003677">
    <property type="term" value="F:DNA binding"/>
    <property type="evidence" value="ECO:0007669"/>
    <property type="project" value="UniProtKB-UniRule"/>
</dbReference>
<dbReference type="GO" id="GO:0009381">
    <property type="term" value="F:excinuclease ABC activity"/>
    <property type="evidence" value="ECO:0007669"/>
    <property type="project" value="UniProtKB-UniRule"/>
</dbReference>
<dbReference type="GO" id="GO:0006289">
    <property type="term" value="P:nucleotide-excision repair"/>
    <property type="evidence" value="ECO:0007669"/>
    <property type="project" value="UniProtKB-UniRule"/>
</dbReference>
<dbReference type="GO" id="GO:0009432">
    <property type="term" value="P:SOS response"/>
    <property type="evidence" value="ECO:0007669"/>
    <property type="project" value="UniProtKB-UniRule"/>
</dbReference>
<dbReference type="CDD" id="cd10434">
    <property type="entry name" value="GIY-YIG_UvrC_Cho"/>
    <property type="match status" value="1"/>
</dbReference>
<dbReference type="FunFam" id="1.10.150.20:FF:000005">
    <property type="entry name" value="UvrABC system protein C"/>
    <property type="match status" value="1"/>
</dbReference>
<dbReference type="FunFam" id="3.30.420.340:FF:000001">
    <property type="entry name" value="UvrABC system protein C"/>
    <property type="match status" value="1"/>
</dbReference>
<dbReference type="FunFam" id="3.40.1440.10:FF:000001">
    <property type="entry name" value="UvrABC system protein C"/>
    <property type="match status" value="1"/>
</dbReference>
<dbReference type="Gene3D" id="1.10.150.20">
    <property type="entry name" value="5' to 3' exonuclease, C-terminal subdomain"/>
    <property type="match status" value="1"/>
</dbReference>
<dbReference type="Gene3D" id="3.40.1440.10">
    <property type="entry name" value="GIY-YIG endonuclease"/>
    <property type="match status" value="1"/>
</dbReference>
<dbReference type="Gene3D" id="4.10.860.10">
    <property type="entry name" value="UVR domain"/>
    <property type="match status" value="1"/>
</dbReference>
<dbReference type="Gene3D" id="3.30.420.340">
    <property type="entry name" value="UvrC, RNAse H endonuclease domain"/>
    <property type="match status" value="1"/>
</dbReference>
<dbReference type="HAMAP" id="MF_00203">
    <property type="entry name" value="UvrC"/>
    <property type="match status" value="1"/>
</dbReference>
<dbReference type="InterPro" id="IPR000305">
    <property type="entry name" value="GIY-YIG_endonuc"/>
</dbReference>
<dbReference type="InterPro" id="IPR035901">
    <property type="entry name" value="GIY-YIG_endonuc_sf"/>
</dbReference>
<dbReference type="InterPro" id="IPR047296">
    <property type="entry name" value="GIY-YIG_UvrC_Cho"/>
</dbReference>
<dbReference type="InterPro" id="IPR003583">
    <property type="entry name" value="Hlx-hairpin-Hlx_DNA-bd_motif"/>
</dbReference>
<dbReference type="InterPro" id="IPR010994">
    <property type="entry name" value="RuvA_2-like"/>
</dbReference>
<dbReference type="InterPro" id="IPR001943">
    <property type="entry name" value="UVR_dom"/>
</dbReference>
<dbReference type="InterPro" id="IPR036876">
    <property type="entry name" value="UVR_dom_sf"/>
</dbReference>
<dbReference type="InterPro" id="IPR050066">
    <property type="entry name" value="UvrABC_protein_C"/>
</dbReference>
<dbReference type="InterPro" id="IPR004791">
    <property type="entry name" value="UvrC"/>
</dbReference>
<dbReference type="InterPro" id="IPR001162">
    <property type="entry name" value="UvrC_RNase_H_dom"/>
</dbReference>
<dbReference type="InterPro" id="IPR038476">
    <property type="entry name" value="UvrC_RNase_H_dom_sf"/>
</dbReference>
<dbReference type="NCBIfam" id="TIGR00194">
    <property type="entry name" value="uvrC"/>
    <property type="match status" value="1"/>
</dbReference>
<dbReference type="PANTHER" id="PTHR30562:SF1">
    <property type="entry name" value="UVRABC SYSTEM PROTEIN C"/>
    <property type="match status" value="1"/>
</dbReference>
<dbReference type="PANTHER" id="PTHR30562">
    <property type="entry name" value="UVRC/OXIDOREDUCTASE"/>
    <property type="match status" value="1"/>
</dbReference>
<dbReference type="Pfam" id="PF01541">
    <property type="entry name" value="GIY-YIG"/>
    <property type="match status" value="1"/>
</dbReference>
<dbReference type="Pfam" id="PF14520">
    <property type="entry name" value="HHH_5"/>
    <property type="match status" value="1"/>
</dbReference>
<dbReference type="Pfam" id="PF02151">
    <property type="entry name" value="UVR"/>
    <property type="match status" value="1"/>
</dbReference>
<dbReference type="Pfam" id="PF22920">
    <property type="entry name" value="UvrC_RNaseH"/>
    <property type="match status" value="1"/>
</dbReference>
<dbReference type="Pfam" id="PF08459">
    <property type="entry name" value="UvrC_RNaseH_dom"/>
    <property type="match status" value="1"/>
</dbReference>
<dbReference type="SMART" id="SM00465">
    <property type="entry name" value="GIYc"/>
    <property type="match status" value="1"/>
</dbReference>
<dbReference type="SMART" id="SM00278">
    <property type="entry name" value="HhH1"/>
    <property type="match status" value="2"/>
</dbReference>
<dbReference type="SUPFAM" id="SSF46600">
    <property type="entry name" value="C-terminal UvrC-binding domain of UvrB"/>
    <property type="match status" value="1"/>
</dbReference>
<dbReference type="SUPFAM" id="SSF82771">
    <property type="entry name" value="GIY-YIG endonuclease"/>
    <property type="match status" value="1"/>
</dbReference>
<dbReference type="SUPFAM" id="SSF47781">
    <property type="entry name" value="RuvA domain 2-like"/>
    <property type="match status" value="1"/>
</dbReference>
<dbReference type="PROSITE" id="PS50164">
    <property type="entry name" value="GIY_YIG"/>
    <property type="match status" value="1"/>
</dbReference>
<dbReference type="PROSITE" id="PS50151">
    <property type="entry name" value="UVR"/>
    <property type="match status" value="1"/>
</dbReference>
<dbReference type="PROSITE" id="PS50165">
    <property type="entry name" value="UVRC"/>
    <property type="match status" value="1"/>
</dbReference>
<protein>
    <recommendedName>
        <fullName evidence="1">UvrABC system protein C</fullName>
        <shortName evidence="1">Protein UvrC</shortName>
    </recommendedName>
    <alternativeName>
        <fullName evidence="1">Excinuclease ABC subunit C</fullName>
    </alternativeName>
</protein>
<accession>B4SQQ3</accession>
<sequence>MTDVSAPVFDGKAFAAQLSTAPGVYRMYAADDTLLYVGKARALRNRVGSYFNGSPKNARIMSMISQITRMDVTVTRSEAEALLLENQLIKSLSPRYNVSLRDDKTYPHVLLTREDWPRIALHRGPRAIPGRYFGPYPGVTAVRETLNLMHKLFKLRSCEDSVFRNRSRPCLQYQIGRCSAPCVELVPAPEYAESVRRAALFLEGKSDELTRELGEQMQAASEALEFEQAARLRDLISSLRSMQTRQYVDGRAADLDVLAVAMQGSQACVLLLAFRDGRNLGTRPFFPRTNGEESPEEVLAAFVSQYYIEFEPPREILLDREIPDADLLVAALSASAERKVQLKWNVRGERAGYVELASRNAQLTLATELNSRNAQHARSDALRDMLGLAEPVKRVECFDISHTLGEATVASCVVFDAAGPVRAQYRRFNISGIEPGDDYAAMRQAIDRRFRRAVEEQGVLPDVLLIDGGAGQLAQAQAALADLGVEGVLLVGVAKGVERRAGHEALVMPDGRELRPGAANPALQFIQQVRDEAHRFAITGHRGRRQKARMTSKLEDIPGIGPRRRASLLKHFGGLVGLKAAGEAEIAKVEGINDALAARIYANLHGLATPDAAE</sequence>
<organism>
    <name type="scientific">Stenotrophomonas maltophilia (strain R551-3)</name>
    <dbReference type="NCBI Taxonomy" id="391008"/>
    <lineage>
        <taxon>Bacteria</taxon>
        <taxon>Pseudomonadati</taxon>
        <taxon>Pseudomonadota</taxon>
        <taxon>Gammaproteobacteria</taxon>
        <taxon>Lysobacterales</taxon>
        <taxon>Lysobacteraceae</taxon>
        <taxon>Stenotrophomonas</taxon>
        <taxon>Stenotrophomonas maltophilia group</taxon>
    </lineage>
</organism>
<comment type="function">
    <text evidence="1">The UvrABC repair system catalyzes the recognition and processing of DNA lesions. UvrC both incises the 5' and 3' sides of the lesion. The N-terminal half is responsible for the 3' incision and the C-terminal half is responsible for the 5' incision.</text>
</comment>
<comment type="subunit">
    <text evidence="1">Interacts with UvrB in an incision complex.</text>
</comment>
<comment type="subcellular location">
    <subcellularLocation>
        <location evidence="1">Cytoplasm</location>
    </subcellularLocation>
</comment>
<comment type="similarity">
    <text evidence="1">Belongs to the UvrC family.</text>
</comment>
<reference key="1">
    <citation type="submission" date="2008-06" db="EMBL/GenBank/DDBJ databases">
        <title>Complete sequence of Stenotrophomonas maltophilia R551-3.</title>
        <authorList>
            <consortium name="US DOE Joint Genome Institute"/>
            <person name="Lucas S."/>
            <person name="Copeland A."/>
            <person name="Lapidus A."/>
            <person name="Glavina del Rio T."/>
            <person name="Dalin E."/>
            <person name="Tice H."/>
            <person name="Pitluck S."/>
            <person name="Chain P."/>
            <person name="Malfatti S."/>
            <person name="Shin M."/>
            <person name="Vergez L."/>
            <person name="Lang D."/>
            <person name="Schmutz J."/>
            <person name="Larimer F."/>
            <person name="Land M."/>
            <person name="Hauser L."/>
            <person name="Kyrpides N."/>
            <person name="Mikhailova N."/>
            <person name="Taghavi S."/>
            <person name="Monchy S."/>
            <person name="Newman L."/>
            <person name="Vangronsveld J."/>
            <person name="van der Lelie D."/>
            <person name="Richardson P."/>
        </authorList>
    </citation>
    <scope>NUCLEOTIDE SEQUENCE [LARGE SCALE GENOMIC DNA]</scope>
    <source>
        <strain>R551-3</strain>
    </source>
</reference>
<name>UVRC_STRM5</name>
<evidence type="ECO:0000255" key="1">
    <source>
        <dbReference type="HAMAP-Rule" id="MF_00203"/>
    </source>
</evidence>
<proteinExistence type="inferred from homology"/>
<keyword id="KW-0963">Cytoplasm</keyword>
<keyword id="KW-0227">DNA damage</keyword>
<keyword id="KW-0228">DNA excision</keyword>
<keyword id="KW-0234">DNA repair</keyword>
<keyword id="KW-0267">Excision nuclease</keyword>
<keyword id="KW-0742">SOS response</keyword>